<proteinExistence type="evidence at protein level"/>
<protein>
    <recommendedName>
        <fullName evidence="4">Kidney mitochondrial carrier protein 1</fullName>
    </recommendedName>
    <alternativeName>
        <fullName>Solute carrier family 25 member 30</fullName>
    </alternativeName>
</protein>
<gene>
    <name evidence="5" type="primary">Slc25a30</name>
    <name type="synonym">Kmcp1</name>
</gene>
<feature type="initiator methionine" description="Removed" evidence="1">
    <location>
        <position position="1"/>
    </location>
</feature>
<feature type="chain" id="PRO_0000288918" description="Kidney mitochondrial carrier protein 1">
    <location>
        <begin position="2"/>
        <end position="291"/>
    </location>
</feature>
<feature type="transmembrane region" description="Helical; Name=1" evidence="2">
    <location>
        <begin position="9"/>
        <end position="26"/>
    </location>
</feature>
<feature type="transmembrane region" description="Helical; Name=2" evidence="2">
    <location>
        <begin position="71"/>
        <end position="89"/>
    </location>
</feature>
<feature type="transmembrane region" description="Helical; Name=3" evidence="2">
    <location>
        <begin position="106"/>
        <end position="124"/>
    </location>
</feature>
<feature type="transmembrane region" description="Helical; Name=4" evidence="2">
    <location>
        <begin position="164"/>
        <end position="183"/>
    </location>
</feature>
<feature type="transmembrane region" description="Helical; Name=5" evidence="2">
    <location>
        <begin position="204"/>
        <end position="224"/>
    </location>
</feature>
<feature type="transmembrane region" description="Helical; Name=6" evidence="2">
    <location>
        <begin position="264"/>
        <end position="283"/>
    </location>
</feature>
<feature type="repeat" description="Solcar 1">
    <location>
        <begin position="7"/>
        <end position="96"/>
    </location>
</feature>
<feature type="repeat" description="Solcar 2">
    <location>
        <begin position="104"/>
        <end position="189"/>
    </location>
</feature>
<feature type="repeat" description="Solcar 3">
    <location>
        <begin position="198"/>
        <end position="289"/>
    </location>
</feature>
<feature type="modified residue" description="N-acetylserine" evidence="1">
    <location>
        <position position="2"/>
    </location>
</feature>
<feature type="sequence conflict" description="In Ref. 1; BAE30385." evidence="4" ref="1">
    <original>I</original>
    <variation>M</variation>
    <location>
        <position position="17"/>
    </location>
</feature>
<comment type="function">
    <text evidence="1">Antiporter that transports inorganic anions (sulfate, sulfite, thiosulfate and phosphate) and, to a lesser extent, a variety of dicarboxylates (e.g. malonate, malate and citramalate) and, even more so, aspartate. The sulfate/sulfate exchange is much higher than the phosphate/phosphate and malate/malate exchanges. The transport affinities is higher for sulfate and thiosulfate than for any other substrate. May catalyze the export of sulfite and thiosulfate (the hydrogen sulfide degradation products) from the mitochondria, thereby modulating the level of the hydrogen sulfide. Also may mediate a very low unidirectional transport of sulfate, phosphate and (S)-malate.</text>
</comment>
<comment type="catalytic activity">
    <reaction evidence="1">
        <text>sulfite(in) + sulfate(out) = sulfite(out) + sulfate(in)</text>
        <dbReference type="Rhea" id="RHEA:73207"/>
        <dbReference type="ChEBI" id="CHEBI:16189"/>
        <dbReference type="ChEBI" id="CHEBI:17359"/>
    </reaction>
</comment>
<comment type="catalytic activity">
    <reaction evidence="1">
        <text>thiosulfate(in) + sulfate(out) = thiosulfate(out) + sulfate(in)</text>
        <dbReference type="Rhea" id="RHEA:73215"/>
        <dbReference type="ChEBI" id="CHEBI:16189"/>
        <dbReference type="ChEBI" id="CHEBI:33542"/>
    </reaction>
</comment>
<comment type="catalytic activity">
    <reaction evidence="1">
        <text>sulfate(out) + phosphate(in) = sulfate(in) + phosphate(out)</text>
        <dbReference type="Rhea" id="RHEA:71631"/>
        <dbReference type="ChEBI" id="CHEBI:16189"/>
        <dbReference type="ChEBI" id="CHEBI:43474"/>
    </reaction>
</comment>
<comment type="catalytic activity">
    <reaction evidence="1">
        <text>oxalate(in) + sulfate(out) = oxalate(out) + sulfate(in)</text>
        <dbReference type="Rhea" id="RHEA:72275"/>
        <dbReference type="ChEBI" id="CHEBI:16189"/>
        <dbReference type="ChEBI" id="CHEBI:30623"/>
    </reaction>
</comment>
<comment type="catalytic activity">
    <reaction evidence="1">
        <text>malonate(in) + sulfate(out) = malonate(out) + sulfate(in)</text>
        <dbReference type="Rhea" id="RHEA:73195"/>
        <dbReference type="ChEBI" id="CHEBI:15792"/>
        <dbReference type="ChEBI" id="CHEBI:16189"/>
    </reaction>
</comment>
<comment type="catalytic activity">
    <reaction evidence="1">
        <text>maleate(in) + sulfate(out) = maleate(out) + sulfate(in)</text>
        <dbReference type="Rhea" id="RHEA:73199"/>
        <dbReference type="ChEBI" id="CHEBI:16189"/>
        <dbReference type="ChEBI" id="CHEBI:30780"/>
    </reaction>
</comment>
<comment type="catalytic activity">
    <reaction evidence="1">
        <text>(S)-malate(in) + sulfate(out) = (S)-malate(out) + sulfate(in)</text>
        <dbReference type="Rhea" id="RHEA:71615"/>
        <dbReference type="ChEBI" id="CHEBI:15589"/>
        <dbReference type="ChEBI" id="CHEBI:16189"/>
    </reaction>
</comment>
<comment type="catalytic activity">
    <reaction evidence="1">
        <text>(3S)-citramalate(in) + sulfate(out) = (3S)-citramalate(out) + sulfate(in)</text>
        <dbReference type="Rhea" id="RHEA:73223"/>
        <dbReference type="ChEBI" id="CHEBI:16189"/>
        <dbReference type="ChEBI" id="CHEBI:30936"/>
    </reaction>
</comment>
<comment type="catalytic activity">
    <reaction evidence="1">
        <text>(3R)-citramalate(in) + sulfate(out) = (3R)-citramalate(out) + sulfate(in)</text>
        <dbReference type="Rhea" id="RHEA:73227"/>
        <dbReference type="ChEBI" id="CHEBI:16189"/>
        <dbReference type="ChEBI" id="CHEBI:30934"/>
    </reaction>
</comment>
<comment type="catalytic activity">
    <reaction evidence="1">
        <text>sulfate(out) + succinate(in) = sulfate(in) + succinate(out)</text>
        <dbReference type="Rhea" id="RHEA:73411"/>
        <dbReference type="ChEBI" id="CHEBI:16189"/>
        <dbReference type="ChEBI" id="CHEBI:30031"/>
    </reaction>
</comment>
<comment type="catalytic activity">
    <reaction evidence="1">
        <text>(S,S)-tartrate(in) + sulfate(out) = (S,S)-tartrate(out) + sulfate(in)</text>
        <dbReference type="Rhea" id="RHEA:73407"/>
        <dbReference type="ChEBI" id="CHEBI:16189"/>
        <dbReference type="ChEBI" id="CHEBI:30927"/>
    </reaction>
</comment>
<comment type="catalytic activity">
    <reaction evidence="1">
        <text>(2R,3R)-tartrate(in) + sulfate(out) = (2R,3R)-tartrate(out) + sulfate(in)</text>
        <dbReference type="Rhea" id="RHEA:73403"/>
        <dbReference type="ChEBI" id="CHEBI:16189"/>
        <dbReference type="ChEBI" id="CHEBI:30924"/>
    </reaction>
</comment>
<comment type="catalytic activity">
    <reaction evidence="1">
        <text>D-aspartate(in) + sulfate(out) = D-aspartate(out) + sulfate(in)</text>
        <dbReference type="Rhea" id="RHEA:73399"/>
        <dbReference type="ChEBI" id="CHEBI:16189"/>
        <dbReference type="ChEBI" id="CHEBI:29990"/>
    </reaction>
</comment>
<comment type="catalytic activity">
    <reaction evidence="1">
        <text>L-aspartate(in) + sulfate(out) = L-aspartate(out) + sulfate(in)</text>
        <dbReference type="Rhea" id="RHEA:73395"/>
        <dbReference type="ChEBI" id="CHEBI:16189"/>
        <dbReference type="ChEBI" id="CHEBI:29991"/>
    </reaction>
</comment>
<comment type="catalytic activity">
    <reaction evidence="1">
        <text>sulfate(in) = sulfate(out)</text>
        <dbReference type="Rhea" id="RHEA:34983"/>
        <dbReference type="ChEBI" id="CHEBI:16189"/>
    </reaction>
</comment>
<comment type="catalytic activity">
    <reaction evidence="1">
        <text>phosphate(in) = phosphate(out)</text>
        <dbReference type="Rhea" id="RHEA:32823"/>
        <dbReference type="ChEBI" id="CHEBI:43474"/>
    </reaction>
</comment>
<comment type="catalytic activity">
    <reaction evidence="1">
        <text>(S)-malate(out) = (S)-malate(in)</text>
        <dbReference type="Rhea" id="RHEA:74555"/>
        <dbReference type="ChEBI" id="CHEBI:15589"/>
    </reaction>
</comment>
<comment type="subunit">
    <text evidence="1">Interacts with VDAC1.</text>
</comment>
<comment type="subcellular location">
    <subcellularLocation>
        <location evidence="3">Mitochondrion inner membrane</location>
        <topology evidence="2">Multi-pass membrane protein</topology>
    </subcellularLocation>
</comment>
<comment type="tissue specificity">
    <text evidence="3">Present in kidney (at protein level). Expressed predominantly within the kidney cortex in the proximal and distal tubules and at lower levels in the testis and white adipose tissue.</text>
</comment>
<comment type="induction">
    <text evidence="3">Up-regulated during fasting and in the regenerative phase following renal tubular injury.</text>
</comment>
<comment type="similarity">
    <text evidence="4">Belongs to the mitochondrial carrier (TC 2.A.29) family.</text>
</comment>
<evidence type="ECO:0000250" key="1">
    <source>
        <dbReference type="UniProtKB" id="Q5SVS4"/>
    </source>
</evidence>
<evidence type="ECO:0000255" key="2"/>
<evidence type="ECO:0000269" key="3">
    <source>
    </source>
</evidence>
<evidence type="ECO:0000305" key="4"/>
<evidence type="ECO:0000312" key="5">
    <source>
        <dbReference type="MGI" id="MGI:1914804"/>
    </source>
</evidence>
<dbReference type="EMBL" id="AK015679">
    <property type="protein sequence ID" value="BAB29928.1"/>
    <property type="molecule type" value="mRNA"/>
</dbReference>
<dbReference type="EMBL" id="AK017035">
    <property type="protein sequence ID" value="BAB30563.1"/>
    <property type="molecule type" value="mRNA"/>
</dbReference>
<dbReference type="EMBL" id="AK151334">
    <property type="protein sequence ID" value="BAE30312.1"/>
    <property type="molecule type" value="mRNA"/>
</dbReference>
<dbReference type="EMBL" id="AK151420">
    <property type="protein sequence ID" value="BAE30385.1"/>
    <property type="molecule type" value="mRNA"/>
</dbReference>
<dbReference type="EMBL" id="AK159122">
    <property type="protein sequence ID" value="BAE34837.1"/>
    <property type="molecule type" value="mRNA"/>
</dbReference>
<dbReference type="EMBL" id="AK159732">
    <property type="protein sequence ID" value="BAE35326.1"/>
    <property type="molecule type" value="mRNA"/>
</dbReference>
<dbReference type="CCDS" id="CCDS27281.1"/>
<dbReference type="RefSeq" id="NP_080508.1">
    <property type="nucleotide sequence ID" value="NM_026232.3"/>
</dbReference>
<dbReference type="SMR" id="Q9CR58"/>
<dbReference type="BioGRID" id="212273">
    <property type="interactions" value="1"/>
</dbReference>
<dbReference type="FunCoup" id="Q9CR58">
    <property type="interactions" value="1235"/>
</dbReference>
<dbReference type="STRING" id="10090.ENSMUSP00000022580"/>
<dbReference type="TCDB" id="2.A.29.24.2">
    <property type="family name" value="the mitochondrial carrier (mc) family"/>
</dbReference>
<dbReference type="PhosphoSitePlus" id="Q9CR58"/>
<dbReference type="PaxDb" id="10090-ENSMUSP00000022580"/>
<dbReference type="ProteomicsDB" id="264785"/>
<dbReference type="Pumba" id="Q9CR58"/>
<dbReference type="Antibodypedia" id="49461">
    <property type="antibodies" value="10 antibodies from 5 providers"/>
</dbReference>
<dbReference type="DNASU" id="67554"/>
<dbReference type="Ensembl" id="ENSMUST00000022580.8">
    <property type="protein sequence ID" value="ENSMUSP00000022580.7"/>
    <property type="gene ID" value="ENSMUSG00000022003.8"/>
</dbReference>
<dbReference type="GeneID" id="67554"/>
<dbReference type="KEGG" id="mmu:67554"/>
<dbReference type="UCSC" id="uc007uqx.1">
    <property type="organism name" value="mouse"/>
</dbReference>
<dbReference type="AGR" id="MGI:1914804"/>
<dbReference type="CTD" id="253512"/>
<dbReference type="MGI" id="MGI:1914804">
    <property type="gene designation" value="Slc25a30"/>
</dbReference>
<dbReference type="VEuPathDB" id="HostDB:ENSMUSG00000022003"/>
<dbReference type="eggNOG" id="KOG0753">
    <property type="taxonomic scope" value="Eukaryota"/>
</dbReference>
<dbReference type="GeneTree" id="ENSGT00940000158961"/>
<dbReference type="HOGENOM" id="CLU_015166_14_2_1"/>
<dbReference type="InParanoid" id="Q9CR58"/>
<dbReference type="OMA" id="IMPALNW"/>
<dbReference type="OrthoDB" id="756301at2759"/>
<dbReference type="PhylomeDB" id="Q9CR58"/>
<dbReference type="TreeFam" id="TF323211"/>
<dbReference type="BioGRID-ORCS" id="67554">
    <property type="hits" value="5 hits in 78 CRISPR screens"/>
</dbReference>
<dbReference type="ChiTaRS" id="Slc25a30">
    <property type="organism name" value="mouse"/>
</dbReference>
<dbReference type="PRO" id="PR:Q9CR58"/>
<dbReference type="Proteomes" id="UP000000589">
    <property type="component" value="Chromosome 14"/>
</dbReference>
<dbReference type="RNAct" id="Q9CR58">
    <property type="molecule type" value="protein"/>
</dbReference>
<dbReference type="Bgee" id="ENSMUSG00000022003">
    <property type="expression patterns" value="Expressed in cumulus cell and 249 other cell types or tissues"/>
</dbReference>
<dbReference type="ExpressionAtlas" id="Q9CR58">
    <property type="expression patterns" value="baseline and differential"/>
</dbReference>
<dbReference type="GO" id="GO:0005743">
    <property type="term" value="C:mitochondrial inner membrane"/>
    <property type="evidence" value="ECO:0007669"/>
    <property type="project" value="UniProtKB-SubCell"/>
</dbReference>
<dbReference type="GO" id="GO:0005739">
    <property type="term" value="C:mitochondrion"/>
    <property type="evidence" value="ECO:0000314"/>
    <property type="project" value="BHF-UCL"/>
</dbReference>
<dbReference type="GO" id="GO:0005452">
    <property type="term" value="F:solute:inorganic anion antiporter activity"/>
    <property type="evidence" value="ECO:0000250"/>
    <property type="project" value="UniProtKB"/>
</dbReference>
<dbReference type="GO" id="GO:0015698">
    <property type="term" value="P:inorganic anion transport"/>
    <property type="evidence" value="ECO:0000250"/>
    <property type="project" value="UniProtKB"/>
</dbReference>
<dbReference type="FunFam" id="1.50.40.10:FF:000006">
    <property type="entry name" value="brain mitochondrial carrier protein 1 isoform X1"/>
    <property type="match status" value="1"/>
</dbReference>
<dbReference type="Gene3D" id="1.50.40.10">
    <property type="entry name" value="Mitochondrial carrier domain"/>
    <property type="match status" value="1"/>
</dbReference>
<dbReference type="InterPro" id="IPR002067">
    <property type="entry name" value="Mit_carrier"/>
</dbReference>
<dbReference type="InterPro" id="IPR050391">
    <property type="entry name" value="Mito_Metabolite_Transporter"/>
</dbReference>
<dbReference type="InterPro" id="IPR018108">
    <property type="entry name" value="Mitochondrial_sb/sol_carrier"/>
</dbReference>
<dbReference type="InterPro" id="IPR023395">
    <property type="entry name" value="Mt_carrier_dom_sf"/>
</dbReference>
<dbReference type="PANTHER" id="PTHR45618">
    <property type="entry name" value="MITOCHONDRIAL DICARBOXYLATE CARRIER-RELATED"/>
    <property type="match status" value="1"/>
</dbReference>
<dbReference type="Pfam" id="PF00153">
    <property type="entry name" value="Mito_carr"/>
    <property type="match status" value="3"/>
</dbReference>
<dbReference type="PRINTS" id="PR00926">
    <property type="entry name" value="MITOCARRIER"/>
</dbReference>
<dbReference type="SUPFAM" id="SSF103506">
    <property type="entry name" value="Mitochondrial carrier"/>
    <property type="match status" value="1"/>
</dbReference>
<dbReference type="PROSITE" id="PS50920">
    <property type="entry name" value="SOLCAR"/>
    <property type="match status" value="3"/>
</dbReference>
<sequence>MSALNWKPFVYGGLASITAECGTFPIDLTKTRLQIQGQTNDANFREIRYRGMLHALMRIGREEGLKALYSGIAPAMLRQASYGTIKIGTYQSLKRLAVERPEDETLLVNVVCGILSGVISSAIANPTDVLKIRMQAQNSAVQGGMIDSFMSIYQQEGTRGLWKGVSLTAQRAAIVVGVELPVYDITKKHLILSGLMGDTVATHFLSSFTCGLVGALASNPVDVVRTRMMNQRALRDGRCAGYKGTLDCLLQTWKNEGFFALYKGFWPNWLRLGPWNIIFFLTYEQLKKLDL</sequence>
<name>KMCP1_MOUSE</name>
<organism>
    <name type="scientific">Mus musculus</name>
    <name type="common">Mouse</name>
    <dbReference type="NCBI Taxonomy" id="10090"/>
    <lineage>
        <taxon>Eukaryota</taxon>
        <taxon>Metazoa</taxon>
        <taxon>Chordata</taxon>
        <taxon>Craniata</taxon>
        <taxon>Vertebrata</taxon>
        <taxon>Euteleostomi</taxon>
        <taxon>Mammalia</taxon>
        <taxon>Eutheria</taxon>
        <taxon>Euarchontoglires</taxon>
        <taxon>Glires</taxon>
        <taxon>Rodentia</taxon>
        <taxon>Myomorpha</taxon>
        <taxon>Muroidea</taxon>
        <taxon>Muridae</taxon>
        <taxon>Murinae</taxon>
        <taxon>Mus</taxon>
        <taxon>Mus</taxon>
    </lineage>
</organism>
<keyword id="KW-0007">Acetylation</keyword>
<keyword id="KW-0472">Membrane</keyword>
<keyword id="KW-0496">Mitochondrion</keyword>
<keyword id="KW-0999">Mitochondrion inner membrane</keyword>
<keyword id="KW-1185">Reference proteome</keyword>
<keyword id="KW-0677">Repeat</keyword>
<keyword id="KW-0812">Transmembrane</keyword>
<keyword id="KW-1133">Transmembrane helix</keyword>
<keyword id="KW-0813">Transport</keyword>
<accession>Q9CR58</accession>
<accession>Q3UAD0</accession>
<reference key="1">
    <citation type="journal article" date="2005" name="Science">
        <title>The transcriptional landscape of the mammalian genome.</title>
        <authorList>
            <person name="Carninci P."/>
            <person name="Kasukawa T."/>
            <person name="Katayama S."/>
            <person name="Gough J."/>
            <person name="Frith M.C."/>
            <person name="Maeda N."/>
            <person name="Oyama R."/>
            <person name="Ravasi T."/>
            <person name="Lenhard B."/>
            <person name="Wells C."/>
            <person name="Kodzius R."/>
            <person name="Shimokawa K."/>
            <person name="Bajic V.B."/>
            <person name="Brenner S.E."/>
            <person name="Batalov S."/>
            <person name="Forrest A.R."/>
            <person name="Zavolan M."/>
            <person name="Davis M.J."/>
            <person name="Wilming L.G."/>
            <person name="Aidinis V."/>
            <person name="Allen J.E."/>
            <person name="Ambesi-Impiombato A."/>
            <person name="Apweiler R."/>
            <person name="Aturaliya R.N."/>
            <person name="Bailey T.L."/>
            <person name="Bansal M."/>
            <person name="Baxter L."/>
            <person name="Beisel K.W."/>
            <person name="Bersano T."/>
            <person name="Bono H."/>
            <person name="Chalk A.M."/>
            <person name="Chiu K.P."/>
            <person name="Choudhary V."/>
            <person name="Christoffels A."/>
            <person name="Clutterbuck D.R."/>
            <person name="Crowe M.L."/>
            <person name="Dalla E."/>
            <person name="Dalrymple B.P."/>
            <person name="de Bono B."/>
            <person name="Della Gatta G."/>
            <person name="di Bernardo D."/>
            <person name="Down T."/>
            <person name="Engstrom P."/>
            <person name="Fagiolini M."/>
            <person name="Faulkner G."/>
            <person name="Fletcher C.F."/>
            <person name="Fukushima T."/>
            <person name="Furuno M."/>
            <person name="Futaki S."/>
            <person name="Gariboldi M."/>
            <person name="Georgii-Hemming P."/>
            <person name="Gingeras T.R."/>
            <person name="Gojobori T."/>
            <person name="Green R.E."/>
            <person name="Gustincich S."/>
            <person name="Harbers M."/>
            <person name="Hayashi Y."/>
            <person name="Hensch T.K."/>
            <person name="Hirokawa N."/>
            <person name="Hill D."/>
            <person name="Huminiecki L."/>
            <person name="Iacono M."/>
            <person name="Ikeo K."/>
            <person name="Iwama A."/>
            <person name="Ishikawa T."/>
            <person name="Jakt M."/>
            <person name="Kanapin A."/>
            <person name="Katoh M."/>
            <person name="Kawasawa Y."/>
            <person name="Kelso J."/>
            <person name="Kitamura H."/>
            <person name="Kitano H."/>
            <person name="Kollias G."/>
            <person name="Krishnan S.P."/>
            <person name="Kruger A."/>
            <person name="Kummerfeld S.K."/>
            <person name="Kurochkin I.V."/>
            <person name="Lareau L.F."/>
            <person name="Lazarevic D."/>
            <person name="Lipovich L."/>
            <person name="Liu J."/>
            <person name="Liuni S."/>
            <person name="McWilliam S."/>
            <person name="Madan Babu M."/>
            <person name="Madera M."/>
            <person name="Marchionni L."/>
            <person name="Matsuda H."/>
            <person name="Matsuzawa S."/>
            <person name="Miki H."/>
            <person name="Mignone F."/>
            <person name="Miyake S."/>
            <person name="Morris K."/>
            <person name="Mottagui-Tabar S."/>
            <person name="Mulder N."/>
            <person name="Nakano N."/>
            <person name="Nakauchi H."/>
            <person name="Ng P."/>
            <person name="Nilsson R."/>
            <person name="Nishiguchi S."/>
            <person name="Nishikawa S."/>
            <person name="Nori F."/>
            <person name="Ohara O."/>
            <person name="Okazaki Y."/>
            <person name="Orlando V."/>
            <person name="Pang K.C."/>
            <person name="Pavan W.J."/>
            <person name="Pavesi G."/>
            <person name="Pesole G."/>
            <person name="Petrovsky N."/>
            <person name="Piazza S."/>
            <person name="Reed J."/>
            <person name="Reid J.F."/>
            <person name="Ring B.Z."/>
            <person name="Ringwald M."/>
            <person name="Rost B."/>
            <person name="Ruan Y."/>
            <person name="Salzberg S.L."/>
            <person name="Sandelin A."/>
            <person name="Schneider C."/>
            <person name="Schoenbach C."/>
            <person name="Sekiguchi K."/>
            <person name="Semple C.A."/>
            <person name="Seno S."/>
            <person name="Sessa L."/>
            <person name="Sheng Y."/>
            <person name="Shibata Y."/>
            <person name="Shimada H."/>
            <person name="Shimada K."/>
            <person name="Silva D."/>
            <person name="Sinclair B."/>
            <person name="Sperling S."/>
            <person name="Stupka E."/>
            <person name="Sugiura K."/>
            <person name="Sultana R."/>
            <person name="Takenaka Y."/>
            <person name="Taki K."/>
            <person name="Tammoja K."/>
            <person name="Tan S.L."/>
            <person name="Tang S."/>
            <person name="Taylor M.S."/>
            <person name="Tegner J."/>
            <person name="Teichmann S.A."/>
            <person name="Ueda H.R."/>
            <person name="van Nimwegen E."/>
            <person name="Verardo R."/>
            <person name="Wei C.L."/>
            <person name="Yagi K."/>
            <person name="Yamanishi H."/>
            <person name="Zabarovsky E."/>
            <person name="Zhu S."/>
            <person name="Zimmer A."/>
            <person name="Hide W."/>
            <person name="Bult C."/>
            <person name="Grimmond S.M."/>
            <person name="Teasdale R.D."/>
            <person name="Liu E.T."/>
            <person name="Brusic V."/>
            <person name="Quackenbush J."/>
            <person name="Wahlestedt C."/>
            <person name="Mattick J.S."/>
            <person name="Hume D.A."/>
            <person name="Kai C."/>
            <person name="Sasaki D."/>
            <person name="Tomaru Y."/>
            <person name="Fukuda S."/>
            <person name="Kanamori-Katayama M."/>
            <person name="Suzuki M."/>
            <person name="Aoki J."/>
            <person name="Arakawa T."/>
            <person name="Iida J."/>
            <person name="Imamura K."/>
            <person name="Itoh M."/>
            <person name="Kato T."/>
            <person name="Kawaji H."/>
            <person name="Kawagashira N."/>
            <person name="Kawashima T."/>
            <person name="Kojima M."/>
            <person name="Kondo S."/>
            <person name="Konno H."/>
            <person name="Nakano K."/>
            <person name="Ninomiya N."/>
            <person name="Nishio T."/>
            <person name="Okada M."/>
            <person name="Plessy C."/>
            <person name="Shibata K."/>
            <person name="Shiraki T."/>
            <person name="Suzuki S."/>
            <person name="Tagami M."/>
            <person name="Waki K."/>
            <person name="Watahiki A."/>
            <person name="Okamura-Oho Y."/>
            <person name="Suzuki H."/>
            <person name="Kawai J."/>
            <person name="Hayashizaki Y."/>
        </authorList>
    </citation>
    <scope>NUCLEOTIDE SEQUENCE [LARGE SCALE MRNA]</scope>
    <source>
        <strain>C57BL/6J</strain>
        <tissue>Bone marrow</tissue>
        <tissue>Testis</tissue>
    </source>
</reference>
<reference key="2">
    <citation type="journal article" date="2005" name="J. Biol. Chem.">
        <title>A new renal mitochondrial carrier, KMCP1, is up-regulated during tubular cell regeneration and induction of antioxidant enzymes.</title>
        <authorList>
            <person name="Haguenauer A."/>
            <person name="Raimbault S."/>
            <person name="Masscheleyn S."/>
            <person name="del Mar Gonzalez-Barroso M."/>
            <person name="Criscuolo F."/>
            <person name="Plamondon J."/>
            <person name="Miroux B."/>
            <person name="Ricquier D."/>
            <person name="Richard D."/>
            <person name="Bouillaud F."/>
            <person name="Pecqueur C."/>
        </authorList>
    </citation>
    <scope>SUBCELLULAR LOCATION</scope>
    <scope>INDUCTION</scope>
    <scope>TISSUE SPECIFICITY</scope>
</reference>
<reference key="3">
    <citation type="journal article" date="2010" name="Cell">
        <title>A tissue-specific atlas of mouse protein phosphorylation and expression.</title>
        <authorList>
            <person name="Huttlin E.L."/>
            <person name="Jedrychowski M.P."/>
            <person name="Elias J.E."/>
            <person name="Goswami T."/>
            <person name="Rad R."/>
            <person name="Beausoleil S.A."/>
            <person name="Villen J."/>
            <person name="Haas W."/>
            <person name="Sowa M.E."/>
            <person name="Gygi S.P."/>
        </authorList>
    </citation>
    <scope>IDENTIFICATION BY MASS SPECTROMETRY [LARGE SCALE ANALYSIS]</scope>
    <source>
        <tissue>Kidney</tissue>
        <tissue>Liver</tissue>
        <tissue>Testis</tissue>
    </source>
</reference>